<keyword id="KW-1185">Reference proteome</keyword>
<keyword id="KW-0732">Signal</keyword>
<proteinExistence type="inferred from homology"/>
<protein>
    <recommendedName>
        <fullName>Uncharacterized protein YddT</fullName>
    </recommendedName>
</protein>
<feature type="signal peptide" evidence="1">
    <location>
        <begin position="1"/>
        <end position="28"/>
    </location>
</feature>
<feature type="chain" id="PRO_0000360580" description="Uncharacterized protein YddT">
    <location>
        <begin position="29"/>
        <end position="228"/>
    </location>
</feature>
<name>YDDT_BACSU</name>
<gene>
    <name type="primary">yddT</name>
    <name type="ordered locus">BSU05100</name>
</gene>
<sequence>MRKKRVITCVMAASLTLGSLLPAGYASAKEDSKTTPSYEELALHYKMKSEKISSNGKLVEIEYVSGNETHKVQMNGNNHTVKVDGIEQKGLNFEYDENVAKRTNYENNNLKSNEFTTQAAKPKKGYHYVGTLSGHTKAAKNALSVTMSLVGIVPGLGWGSKAATILFSYWAKEQIPDAYYKYDLYEKGAMTDSWYQYATVQFFEDKAHKKKMGKPWTSTPAKVDLPNS</sequence>
<evidence type="ECO:0000255" key="1"/>
<dbReference type="EMBL" id="AF029355">
    <property type="protein sequence ID" value="AAF76248.1"/>
    <property type="molecule type" value="Genomic_DNA"/>
</dbReference>
<dbReference type="EMBL" id="AB001488">
    <property type="protein sequence ID" value="BAA19346.1"/>
    <property type="molecule type" value="Genomic_DNA"/>
</dbReference>
<dbReference type="EMBL" id="AL009126">
    <property type="protein sequence ID" value="CAB12317.1"/>
    <property type="molecule type" value="Genomic_DNA"/>
</dbReference>
<dbReference type="PIR" id="B69777">
    <property type="entry name" value="B69777"/>
</dbReference>
<dbReference type="RefSeq" id="NP_388391.1">
    <property type="nucleotide sequence ID" value="NC_000964.3"/>
</dbReference>
<dbReference type="RefSeq" id="WP_004399401.1">
    <property type="nucleotide sequence ID" value="NZ_OZ025638.1"/>
</dbReference>
<dbReference type="FunCoup" id="P96657">
    <property type="interactions" value="98"/>
</dbReference>
<dbReference type="STRING" id="224308.BSU05100"/>
<dbReference type="PaxDb" id="224308-BSU05100"/>
<dbReference type="DNASU" id="939913"/>
<dbReference type="EnsemblBacteria" id="CAB12317">
    <property type="protein sequence ID" value="CAB12317"/>
    <property type="gene ID" value="BSU_05100"/>
</dbReference>
<dbReference type="GeneID" id="939913"/>
<dbReference type="KEGG" id="bsu:BSU05100"/>
<dbReference type="PATRIC" id="fig|224308.179.peg.543"/>
<dbReference type="InParanoid" id="P96657"/>
<dbReference type="OrthoDB" id="2909485at2"/>
<dbReference type="BioCyc" id="BSUB:BSU05100-MONOMER"/>
<dbReference type="Proteomes" id="UP000001570">
    <property type="component" value="Chromosome"/>
</dbReference>
<organism>
    <name type="scientific">Bacillus subtilis (strain 168)</name>
    <dbReference type="NCBI Taxonomy" id="224308"/>
    <lineage>
        <taxon>Bacteria</taxon>
        <taxon>Bacillati</taxon>
        <taxon>Bacillota</taxon>
        <taxon>Bacilli</taxon>
        <taxon>Bacillales</taxon>
        <taxon>Bacillaceae</taxon>
        <taxon>Bacillus</taxon>
    </lineage>
</organism>
<accession>P96657</accession>
<accession>Q797J0</accession>
<reference key="1">
    <citation type="journal article" date="2000" name="Mol. Microbiol.">
        <title>Study of chromosome rearrangements associated with the trpE26 mutation of Bacillus subtilis.</title>
        <authorList>
            <person name="Regamey A."/>
            <person name="Lazarevic V."/>
            <person name="Hauser P."/>
            <person name="Karamata D."/>
        </authorList>
    </citation>
    <scope>NUCLEOTIDE SEQUENCE [GENOMIC DNA]</scope>
    <source>
        <strain>168</strain>
    </source>
</reference>
<reference key="2">
    <citation type="submission" date="1997-03" db="EMBL/GenBank/DDBJ databases">
        <title>A 148 kbp sequence of the region between 35 and 47 degree of the Bacillus subtilis genome.</title>
        <authorList>
            <person name="Kasahara Y."/>
            <person name="Nakai S."/>
            <person name="Lee S."/>
            <person name="Sadaie Y."/>
            <person name="Ogasawara N."/>
        </authorList>
    </citation>
    <scope>NUCLEOTIDE SEQUENCE [GENOMIC DNA]</scope>
    <source>
        <strain>168</strain>
    </source>
</reference>
<reference key="3">
    <citation type="journal article" date="1997" name="Nature">
        <title>The complete genome sequence of the Gram-positive bacterium Bacillus subtilis.</title>
        <authorList>
            <person name="Kunst F."/>
            <person name="Ogasawara N."/>
            <person name="Moszer I."/>
            <person name="Albertini A.M."/>
            <person name="Alloni G."/>
            <person name="Azevedo V."/>
            <person name="Bertero M.G."/>
            <person name="Bessieres P."/>
            <person name="Bolotin A."/>
            <person name="Borchert S."/>
            <person name="Borriss R."/>
            <person name="Boursier L."/>
            <person name="Brans A."/>
            <person name="Braun M."/>
            <person name="Brignell S.C."/>
            <person name="Bron S."/>
            <person name="Brouillet S."/>
            <person name="Bruschi C.V."/>
            <person name="Caldwell B."/>
            <person name="Capuano V."/>
            <person name="Carter N.M."/>
            <person name="Choi S.-K."/>
            <person name="Codani J.-J."/>
            <person name="Connerton I.F."/>
            <person name="Cummings N.J."/>
            <person name="Daniel R.A."/>
            <person name="Denizot F."/>
            <person name="Devine K.M."/>
            <person name="Duesterhoeft A."/>
            <person name="Ehrlich S.D."/>
            <person name="Emmerson P.T."/>
            <person name="Entian K.-D."/>
            <person name="Errington J."/>
            <person name="Fabret C."/>
            <person name="Ferrari E."/>
            <person name="Foulger D."/>
            <person name="Fritz C."/>
            <person name="Fujita M."/>
            <person name="Fujita Y."/>
            <person name="Fuma S."/>
            <person name="Galizzi A."/>
            <person name="Galleron N."/>
            <person name="Ghim S.-Y."/>
            <person name="Glaser P."/>
            <person name="Goffeau A."/>
            <person name="Golightly E.J."/>
            <person name="Grandi G."/>
            <person name="Guiseppi G."/>
            <person name="Guy B.J."/>
            <person name="Haga K."/>
            <person name="Haiech J."/>
            <person name="Harwood C.R."/>
            <person name="Henaut A."/>
            <person name="Hilbert H."/>
            <person name="Holsappel S."/>
            <person name="Hosono S."/>
            <person name="Hullo M.-F."/>
            <person name="Itaya M."/>
            <person name="Jones L.-M."/>
            <person name="Joris B."/>
            <person name="Karamata D."/>
            <person name="Kasahara Y."/>
            <person name="Klaerr-Blanchard M."/>
            <person name="Klein C."/>
            <person name="Kobayashi Y."/>
            <person name="Koetter P."/>
            <person name="Koningstein G."/>
            <person name="Krogh S."/>
            <person name="Kumano M."/>
            <person name="Kurita K."/>
            <person name="Lapidus A."/>
            <person name="Lardinois S."/>
            <person name="Lauber J."/>
            <person name="Lazarevic V."/>
            <person name="Lee S.-M."/>
            <person name="Levine A."/>
            <person name="Liu H."/>
            <person name="Masuda S."/>
            <person name="Mauel C."/>
            <person name="Medigue C."/>
            <person name="Medina N."/>
            <person name="Mellado R.P."/>
            <person name="Mizuno M."/>
            <person name="Moestl D."/>
            <person name="Nakai S."/>
            <person name="Noback M."/>
            <person name="Noone D."/>
            <person name="O'Reilly M."/>
            <person name="Ogawa K."/>
            <person name="Ogiwara A."/>
            <person name="Oudega B."/>
            <person name="Park S.-H."/>
            <person name="Parro V."/>
            <person name="Pohl T.M."/>
            <person name="Portetelle D."/>
            <person name="Porwollik S."/>
            <person name="Prescott A.M."/>
            <person name="Presecan E."/>
            <person name="Pujic P."/>
            <person name="Purnelle B."/>
            <person name="Rapoport G."/>
            <person name="Rey M."/>
            <person name="Reynolds S."/>
            <person name="Rieger M."/>
            <person name="Rivolta C."/>
            <person name="Rocha E."/>
            <person name="Roche B."/>
            <person name="Rose M."/>
            <person name="Sadaie Y."/>
            <person name="Sato T."/>
            <person name="Scanlan E."/>
            <person name="Schleich S."/>
            <person name="Schroeter R."/>
            <person name="Scoffone F."/>
            <person name="Sekiguchi J."/>
            <person name="Sekowska A."/>
            <person name="Seror S.J."/>
            <person name="Serror P."/>
            <person name="Shin B.-S."/>
            <person name="Soldo B."/>
            <person name="Sorokin A."/>
            <person name="Tacconi E."/>
            <person name="Takagi T."/>
            <person name="Takahashi H."/>
            <person name="Takemaru K."/>
            <person name="Takeuchi M."/>
            <person name="Tamakoshi A."/>
            <person name="Tanaka T."/>
            <person name="Terpstra P."/>
            <person name="Tognoni A."/>
            <person name="Tosato V."/>
            <person name="Uchiyama S."/>
            <person name="Vandenbol M."/>
            <person name="Vannier F."/>
            <person name="Vassarotti A."/>
            <person name="Viari A."/>
            <person name="Wambutt R."/>
            <person name="Wedler E."/>
            <person name="Wedler H."/>
            <person name="Weitzenegger T."/>
            <person name="Winters P."/>
            <person name="Wipat A."/>
            <person name="Yamamoto H."/>
            <person name="Yamane K."/>
            <person name="Yasumoto K."/>
            <person name="Yata K."/>
            <person name="Yoshida K."/>
            <person name="Yoshikawa H.-F."/>
            <person name="Zumstein E."/>
            <person name="Yoshikawa H."/>
            <person name="Danchin A."/>
        </authorList>
    </citation>
    <scope>NUCLEOTIDE SEQUENCE [LARGE SCALE GENOMIC DNA]</scope>
    <source>
        <strain>168</strain>
    </source>
</reference>